<keyword id="KW-0167">Capsid protein</keyword>
<keyword id="KW-1139">Helical capsid protein</keyword>
<keyword id="KW-1185">Reference proteome</keyword>
<keyword id="KW-0687">Ribonucleoprotein</keyword>
<keyword id="KW-0694">RNA-binding</keyword>
<keyword id="KW-0543">Viral nucleoprotein</keyword>
<keyword id="KW-0946">Virion</keyword>
<reference key="1">
    <citation type="journal article" date="1990" name="J. Gen. Virol.">
        <title>The S RNA segment of tomato spotted wilt virus has an ambisense character.</title>
        <authorList>
            <person name="de Haan P."/>
            <person name="Wagemakers L."/>
            <person name="Peters D."/>
            <person name="Goldbach R."/>
        </authorList>
    </citation>
    <scope>NUCLEOTIDE SEQUENCE [GENOMIC RNA]</scope>
</reference>
<comment type="function">
    <text evidence="1">Encapsidates the genome protecting it from nucleases. The encapsidated genomic RNA is termed the nucleocapsid (NC) and serves as template for transcription and replication. The NC have a helical organization.</text>
</comment>
<comment type="subunit">
    <text evidence="1">Homotrimer. Binds the viral genomic RNA.</text>
</comment>
<comment type="subcellular location">
    <subcellularLocation>
        <location evidence="1">Virion</location>
    </subcellularLocation>
    <text evidence="1">Located inside the virion, complexed with the viral RNA.</text>
</comment>
<comment type="domain">
    <text evidence="1">The N-terminus and C-terminus are involved in homooligomerization and play an essential role in viral RNA synthesis.</text>
</comment>
<comment type="similarity">
    <text evidence="2">Belongs to the tospovirus nucleocapsid protein family.</text>
</comment>
<proteinExistence type="inferred from homology"/>
<organismHost>
    <name type="scientific">Frankliniella occidentalis</name>
    <name type="common">Western flower thrips</name>
    <name type="synonym">Euthrips occidentalis</name>
    <dbReference type="NCBI Taxonomy" id="133901"/>
</organismHost>
<organismHost>
    <name type="scientific">Scirtothrips dorsalis</name>
    <name type="common">Chilli thrips</name>
    <dbReference type="NCBI Taxonomy" id="163899"/>
</organismHost>
<organismHost>
    <name type="scientific">Solanum lycopersicum</name>
    <name type="common">Tomato</name>
    <name type="synonym">Lycopersicon esculentum</name>
    <dbReference type="NCBI Taxonomy" id="4081"/>
</organismHost>
<organismHost>
    <name type="scientific">Thrips tabaci</name>
    <dbReference type="NCBI Taxonomy" id="161014"/>
</organismHost>
<sequence>MSKVKLTKESIVALLTQGKDLEFEEDQNLVAFNFKTFCLENIDQIKKMSVISCLTFLKNRQSIMKVIKQSDFTFGKITIKKTSDRIGGTDMTFRRLDSLIRVRLVEETGNSENLNTIKSKIASHPLIQAYGLPLDDAKSVRLAIMLGGSLPLIASVDSFEMISVVLAIYQDAKYKDLGIDPKKYDTKEALGKVCTVLKSKAFEMNEDQVKKGKEYAAILSSSNPNAKGSVAMEHYSETLNKFYEMFGVKKQAKLAELA</sequence>
<feature type="chain" id="PRO_0000222001" description="Nucleoprotein">
    <location>
        <begin position="1"/>
        <end position="258"/>
    </location>
</feature>
<protein>
    <recommendedName>
        <fullName>Nucleoprotein</fullName>
    </recommendedName>
    <alternativeName>
        <fullName>Nucleocapsid protein</fullName>
        <shortName>Protein N</shortName>
    </alternativeName>
</protein>
<name>NCAP_TSWV1</name>
<organism>
    <name type="scientific">Tomato spotted wilt virus (strain Brazilian Br-01)</name>
    <name type="common">TSWV</name>
    <dbReference type="NCBI Taxonomy" id="36413"/>
    <lineage>
        <taxon>Viruses</taxon>
        <taxon>Riboviria</taxon>
        <taxon>Orthornavirae</taxon>
        <taxon>Negarnaviricota</taxon>
        <taxon>Polyploviricotina</taxon>
        <taxon>Ellioviricetes</taxon>
        <taxon>Bunyavirales</taxon>
        <taxon>Tospoviridae</taxon>
        <taxon>Orthotospovirus</taxon>
        <taxon>Tomato spotted wilt virus</taxon>
    </lineage>
</organism>
<evidence type="ECO:0000250" key="1">
    <source>
        <dbReference type="UniProtKB" id="P16495"/>
    </source>
</evidence>
<evidence type="ECO:0000305" key="2"/>
<dbReference type="EMBL" id="D00645">
    <property type="protein sequence ID" value="BAA00541.1"/>
    <property type="molecule type" value="Genomic_RNA"/>
</dbReference>
<dbReference type="PIR" id="JQ0548">
    <property type="entry name" value="VHVUWC"/>
</dbReference>
<dbReference type="SMR" id="P25999"/>
<dbReference type="KEGG" id="vg:956581"/>
<dbReference type="Proteomes" id="UP000006674">
    <property type="component" value="Genome"/>
</dbReference>
<dbReference type="GO" id="GO:0019029">
    <property type="term" value="C:helical viral capsid"/>
    <property type="evidence" value="ECO:0007669"/>
    <property type="project" value="UniProtKB-KW"/>
</dbReference>
<dbReference type="GO" id="GO:1990904">
    <property type="term" value="C:ribonucleoprotein complex"/>
    <property type="evidence" value="ECO:0007669"/>
    <property type="project" value="UniProtKB-KW"/>
</dbReference>
<dbReference type="GO" id="GO:0019013">
    <property type="term" value="C:viral nucleocapsid"/>
    <property type="evidence" value="ECO:0007669"/>
    <property type="project" value="UniProtKB-KW"/>
</dbReference>
<dbReference type="GO" id="GO:0003723">
    <property type="term" value="F:RNA binding"/>
    <property type="evidence" value="ECO:0007669"/>
    <property type="project" value="UniProtKB-KW"/>
</dbReference>
<dbReference type="InterPro" id="IPR002517">
    <property type="entry name" value="Tospo_nucleocap"/>
</dbReference>
<dbReference type="Pfam" id="PF01533">
    <property type="entry name" value="Tospo_nucleocap"/>
    <property type="match status" value="1"/>
</dbReference>
<dbReference type="PIRSF" id="PIRSF003948">
    <property type="entry name" value="N_TospoV"/>
    <property type="match status" value="1"/>
</dbReference>
<gene>
    <name type="primary">N</name>
</gene>
<accession>P25999</accession>